<comment type="function">
    <text evidence="1">Part of the ABC transporter complex hrt involved in hemin import. Responsible for energy coupling to the transport system (By similarity).</text>
</comment>
<comment type="subunit">
    <text evidence="1">The complex is composed of two ATP-binding proteins (HrtA), two transmembrane proteins (HrtB) and a solute-binding protein.</text>
</comment>
<comment type="subcellular location">
    <subcellularLocation>
        <location evidence="3">Cell membrane</location>
        <topology evidence="3">Peripheral membrane protein</topology>
    </subcellularLocation>
</comment>
<comment type="similarity">
    <text evidence="3">Belongs to the ABC transporter superfamily. HrtA family.</text>
</comment>
<feature type="chain" id="PRO_0000270140" description="Putative hemin import ATP-binding protein HrtA">
    <location>
        <begin position="1"/>
        <end position="222"/>
    </location>
</feature>
<feature type="domain" description="ABC transporter" evidence="2">
    <location>
        <begin position="3"/>
        <end position="222"/>
    </location>
</feature>
<feature type="binding site" evidence="2">
    <location>
        <begin position="39"/>
        <end position="46"/>
    </location>
    <ligand>
        <name>ATP</name>
        <dbReference type="ChEBI" id="CHEBI:30616"/>
    </ligand>
</feature>
<proteinExistence type="inferred from homology"/>
<organism>
    <name type="scientific">Staphylococcus saprophyticus subsp. saprophyticus (strain ATCC 15305 / DSM 20229 / NCIMB 8711 / NCTC 7292 / S-41)</name>
    <dbReference type="NCBI Taxonomy" id="342451"/>
    <lineage>
        <taxon>Bacteria</taxon>
        <taxon>Bacillati</taxon>
        <taxon>Bacillota</taxon>
        <taxon>Bacilli</taxon>
        <taxon>Bacillales</taxon>
        <taxon>Staphylococcaceae</taxon>
        <taxon>Staphylococcus</taxon>
    </lineage>
</organism>
<protein>
    <recommendedName>
        <fullName>Putative hemin import ATP-binding protein HrtA</fullName>
        <ecNumber>7.6.2.-</ecNumber>
    </recommendedName>
</protein>
<keyword id="KW-0067">ATP-binding</keyword>
<keyword id="KW-1003">Cell membrane</keyword>
<keyword id="KW-0472">Membrane</keyword>
<keyword id="KW-0547">Nucleotide-binding</keyword>
<keyword id="KW-1185">Reference proteome</keyword>
<keyword id="KW-1278">Translocase</keyword>
<keyword id="KW-0813">Transport</keyword>
<accession>Q49ZT6</accession>
<reference key="1">
    <citation type="journal article" date="2005" name="Proc. Natl. Acad. Sci. U.S.A.">
        <title>Whole genome sequence of Staphylococcus saprophyticus reveals the pathogenesis of uncomplicated urinary tract infection.</title>
        <authorList>
            <person name="Kuroda M."/>
            <person name="Yamashita A."/>
            <person name="Hirakawa H."/>
            <person name="Kumano M."/>
            <person name="Morikawa K."/>
            <person name="Higashide M."/>
            <person name="Maruyama A."/>
            <person name="Inose Y."/>
            <person name="Matoba K."/>
            <person name="Toh H."/>
            <person name="Kuhara S."/>
            <person name="Hattori M."/>
            <person name="Ohta T."/>
        </authorList>
    </citation>
    <scope>NUCLEOTIDE SEQUENCE [LARGE SCALE GENOMIC DNA]</scope>
    <source>
        <strain>ATCC 15305 / DSM 20229 / NCIMB 8711 / NCTC 7292 / S-41</strain>
    </source>
</reference>
<gene>
    <name type="primary">hrtA</name>
    <name type="ordered locus">SSP0543</name>
</gene>
<sequence length="222" mass="24491">MSLQVKDIKKSFGNGQSETPVLKGINFNVNEGEFVILNGASGSGKTTLLTILGGLLSQSSGDILYNNQPLFTRDRKASELRLNEIGFIFQSSHLVPYLKVKAQLTTIGKEAGMTMQEANQRAETLLKQIGLNHRLTAFPHMLSGGEKQRVAIVRALMNHPKIILADEPTASLDAERATEVIEMIKNQIKSKKMIGIMITHDKRLFEYADKVIELDDGVITNA</sequence>
<evidence type="ECO:0000250" key="1"/>
<evidence type="ECO:0000255" key="2">
    <source>
        <dbReference type="PROSITE-ProRule" id="PRU00434"/>
    </source>
</evidence>
<evidence type="ECO:0000305" key="3"/>
<dbReference type="EC" id="7.6.2.-"/>
<dbReference type="EMBL" id="AP008934">
    <property type="protein sequence ID" value="BAE17688.1"/>
    <property type="molecule type" value="Genomic_DNA"/>
</dbReference>
<dbReference type="RefSeq" id="WP_011302494.1">
    <property type="nucleotide sequence ID" value="NZ_MTGA01000036.1"/>
</dbReference>
<dbReference type="SMR" id="Q49ZT6"/>
<dbReference type="GeneID" id="3616836"/>
<dbReference type="KEGG" id="ssp:SSP0543"/>
<dbReference type="PATRIC" id="fig|342451.11.peg.547"/>
<dbReference type="eggNOG" id="COG1136">
    <property type="taxonomic scope" value="Bacteria"/>
</dbReference>
<dbReference type="HOGENOM" id="CLU_000604_1_22_9"/>
<dbReference type="OrthoDB" id="9791546at2"/>
<dbReference type="Proteomes" id="UP000006371">
    <property type="component" value="Chromosome"/>
</dbReference>
<dbReference type="GO" id="GO:0005886">
    <property type="term" value="C:plasma membrane"/>
    <property type="evidence" value="ECO:0007669"/>
    <property type="project" value="UniProtKB-SubCell"/>
</dbReference>
<dbReference type="GO" id="GO:0005524">
    <property type="term" value="F:ATP binding"/>
    <property type="evidence" value="ECO:0007669"/>
    <property type="project" value="UniProtKB-KW"/>
</dbReference>
<dbReference type="GO" id="GO:0016887">
    <property type="term" value="F:ATP hydrolysis activity"/>
    <property type="evidence" value="ECO:0007669"/>
    <property type="project" value="InterPro"/>
</dbReference>
<dbReference type="Gene3D" id="3.40.50.300">
    <property type="entry name" value="P-loop containing nucleotide triphosphate hydrolases"/>
    <property type="match status" value="1"/>
</dbReference>
<dbReference type="InterPro" id="IPR003593">
    <property type="entry name" value="AAA+_ATPase"/>
</dbReference>
<dbReference type="InterPro" id="IPR003439">
    <property type="entry name" value="ABC_transporter-like_ATP-bd"/>
</dbReference>
<dbReference type="InterPro" id="IPR017871">
    <property type="entry name" value="ABC_transporter-like_CS"/>
</dbReference>
<dbReference type="InterPro" id="IPR027417">
    <property type="entry name" value="P-loop_NTPase"/>
</dbReference>
<dbReference type="PANTHER" id="PTHR42798:SF6">
    <property type="entry name" value="CELL DIVISION ATP-BINDING PROTEIN FTSE"/>
    <property type="match status" value="1"/>
</dbReference>
<dbReference type="PANTHER" id="PTHR42798">
    <property type="entry name" value="LIPOPROTEIN-RELEASING SYSTEM ATP-BINDING PROTEIN LOLD"/>
    <property type="match status" value="1"/>
</dbReference>
<dbReference type="Pfam" id="PF00005">
    <property type="entry name" value="ABC_tran"/>
    <property type="match status" value="1"/>
</dbReference>
<dbReference type="SMART" id="SM00382">
    <property type="entry name" value="AAA"/>
    <property type="match status" value="1"/>
</dbReference>
<dbReference type="SUPFAM" id="SSF52540">
    <property type="entry name" value="P-loop containing nucleoside triphosphate hydrolases"/>
    <property type="match status" value="1"/>
</dbReference>
<dbReference type="PROSITE" id="PS00211">
    <property type="entry name" value="ABC_TRANSPORTER_1"/>
    <property type="match status" value="1"/>
</dbReference>
<dbReference type="PROSITE" id="PS50893">
    <property type="entry name" value="ABC_TRANSPORTER_2"/>
    <property type="match status" value="1"/>
</dbReference>
<name>HRTA_STAS1</name>